<evidence type="ECO:0000255" key="1">
    <source>
        <dbReference type="HAMAP-Rule" id="MF_00386"/>
    </source>
</evidence>
<evidence type="ECO:0000256" key="2">
    <source>
        <dbReference type="SAM" id="MobiDB-lite"/>
    </source>
</evidence>
<proteinExistence type="inferred from homology"/>
<name>YIDD_STAAR</name>
<feature type="chain" id="PRO_0000171869" description="Putative membrane protein insertion efficiency factor">
    <location>
        <begin position="1"/>
        <end position="85"/>
    </location>
</feature>
<feature type="region of interest" description="Disordered" evidence="2">
    <location>
        <begin position="62"/>
        <end position="85"/>
    </location>
</feature>
<sequence>MKKIFLAMIHFYQRFISPLTPPTCRFYPTCSEYTREAIQYHGAFKGLYLGIRRILKCHPLHKGGFDPVPLKKDKSASKHSHKHNH</sequence>
<accession>Q6GFR2</accession>
<comment type="function">
    <text evidence="1">Could be involved in insertion of integral membrane proteins into the membrane.</text>
</comment>
<comment type="subcellular location">
    <subcellularLocation>
        <location evidence="1">Cell membrane</location>
        <topology evidence="1">Peripheral membrane protein</topology>
        <orientation evidence="1">Cytoplasmic side</orientation>
    </subcellularLocation>
</comment>
<comment type="similarity">
    <text evidence="1">Belongs to the UPF0161 family.</text>
</comment>
<keyword id="KW-1003">Cell membrane</keyword>
<keyword id="KW-0472">Membrane</keyword>
<gene>
    <name type="ordered locus">SAR1875</name>
</gene>
<organism>
    <name type="scientific">Staphylococcus aureus (strain MRSA252)</name>
    <dbReference type="NCBI Taxonomy" id="282458"/>
    <lineage>
        <taxon>Bacteria</taxon>
        <taxon>Bacillati</taxon>
        <taxon>Bacillota</taxon>
        <taxon>Bacilli</taxon>
        <taxon>Bacillales</taxon>
        <taxon>Staphylococcaceae</taxon>
        <taxon>Staphylococcus</taxon>
    </lineage>
</organism>
<dbReference type="EMBL" id="BX571856">
    <property type="protein sequence ID" value="CAG40865.1"/>
    <property type="molecule type" value="Genomic_DNA"/>
</dbReference>
<dbReference type="KEGG" id="sar:SAR1875"/>
<dbReference type="HOGENOM" id="CLU_144811_6_0_9"/>
<dbReference type="Proteomes" id="UP000000596">
    <property type="component" value="Chromosome"/>
</dbReference>
<dbReference type="GO" id="GO:0005886">
    <property type="term" value="C:plasma membrane"/>
    <property type="evidence" value="ECO:0007669"/>
    <property type="project" value="UniProtKB-SubCell"/>
</dbReference>
<dbReference type="HAMAP" id="MF_00386">
    <property type="entry name" value="UPF0161_YidD"/>
    <property type="match status" value="1"/>
</dbReference>
<dbReference type="InterPro" id="IPR002696">
    <property type="entry name" value="Membr_insert_effic_factor_YidD"/>
</dbReference>
<dbReference type="NCBIfam" id="TIGR00278">
    <property type="entry name" value="membrane protein insertion efficiency factor YidD"/>
    <property type="match status" value="1"/>
</dbReference>
<dbReference type="PANTHER" id="PTHR33383">
    <property type="entry name" value="MEMBRANE PROTEIN INSERTION EFFICIENCY FACTOR-RELATED"/>
    <property type="match status" value="1"/>
</dbReference>
<dbReference type="PANTHER" id="PTHR33383:SF1">
    <property type="entry name" value="MEMBRANE PROTEIN INSERTION EFFICIENCY FACTOR-RELATED"/>
    <property type="match status" value="1"/>
</dbReference>
<dbReference type="Pfam" id="PF01809">
    <property type="entry name" value="YidD"/>
    <property type="match status" value="1"/>
</dbReference>
<dbReference type="SMART" id="SM01234">
    <property type="entry name" value="Haemolytic"/>
    <property type="match status" value="1"/>
</dbReference>
<reference key="1">
    <citation type="journal article" date="2004" name="Proc. Natl. Acad. Sci. U.S.A.">
        <title>Complete genomes of two clinical Staphylococcus aureus strains: evidence for the rapid evolution of virulence and drug resistance.</title>
        <authorList>
            <person name="Holden M.T.G."/>
            <person name="Feil E.J."/>
            <person name="Lindsay J.A."/>
            <person name="Peacock S.J."/>
            <person name="Day N.P.J."/>
            <person name="Enright M.C."/>
            <person name="Foster T.J."/>
            <person name="Moore C.E."/>
            <person name="Hurst L."/>
            <person name="Atkin R."/>
            <person name="Barron A."/>
            <person name="Bason N."/>
            <person name="Bentley S.D."/>
            <person name="Chillingworth C."/>
            <person name="Chillingworth T."/>
            <person name="Churcher C."/>
            <person name="Clark L."/>
            <person name="Corton C."/>
            <person name="Cronin A."/>
            <person name="Doggett J."/>
            <person name="Dowd L."/>
            <person name="Feltwell T."/>
            <person name="Hance Z."/>
            <person name="Harris B."/>
            <person name="Hauser H."/>
            <person name="Holroyd S."/>
            <person name="Jagels K."/>
            <person name="James K.D."/>
            <person name="Lennard N."/>
            <person name="Line A."/>
            <person name="Mayes R."/>
            <person name="Moule S."/>
            <person name="Mungall K."/>
            <person name="Ormond D."/>
            <person name="Quail M.A."/>
            <person name="Rabbinowitsch E."/>
            <person name="Rutherford K.M."/>
            <person name="Sanders M."/>
            <person name="Sharp S."/>
            <person name="Simmonds M."/>
            <person name="Stevens K."/>
            <person name="Whitehead S."/>
            <person name="Barrell B.G."/>
            <person name="Spratt B.G."/>
            <person name="Parkhill J."/>
        </authorList>
    </citation>
    <scope>NUCLEOTIDE SEQUENCE [LARGE SCALE GENOMIC DNA]</scope>
    <source>
        <strain>MRSA252</strain>
    </source>
</reference>
<protein>
    <recommendedName>
        <fullName evidence="1">Putative membrane protein insertion efficiency factor</fullName>
    </recommendedName>
</protein>